<organism>
    <name type="scientific">Pyrococcus furiosus (strain ATCC 43587 / DSM 3638 / JCM 8422 / Vc1)</name>
    <dbReference type="NCBI Taxonomy" id="186497"/>
    <lineage>
        <taxon>Archaea</taxon>
        <taxon>Methanobacteriati</taxon>
        <taxon>Methanobacteriota</taxon>
        <taxon>Thermococci</taxon>
        <taxon>Thermococcales</taxon>
        <taxon>Thermococcaceae</taxon>
        <taxon>Pyrococcus</taxon>
    </lineage>
</organism>
<name>PELO_PYRFU</name>
<dbReference type="EC" id="3.1.-.-" evidence="1"/>
<dbReference type="EMBL" id="AE009950">
    <property type="protein sequence ID" value="AAL81503.1"/>
    <property type="molecule type" value="Genomic_DNA"/>
</dbReference>
<dbReference type="RefSeq" id="WP_011012526.1">
    <property type="nucleotide sequence ID" value="NZ_CP023154.1"/>
</dbReference>
<dbReference type="SMR" id="Q8U150"/>
<dbReference type="STRING" id="186497.PF1379"/>
<dbReference type="PaxDb" id="186497-PF1379"/>
<dbReference type="KEGG" id="pfu:PF1379"/>
<dbReference type="PATRIC" id="fig|186497.12.peg.1442"/>
<dbReference type="eggNOG" id="arCOG01741">
    <property type="taxonomic scope" value="Archaea"/>
</dbReference>
<dbReference type="HOGENOM" id="CLU_023334_0_0_2"/>
<dbReference type="OrthoDB" id="31300at2157"/>
<dbReference type="PhylomeDB" id="Q8U150"/>
<dbReference type="Proteomes" id="UP000001013">
    <property type="component" value="Chromosome"/>
</dbReference>
<dbReference type="GO" id="GO:0005737">
    <property type="term" value="C:cytoplasm"/>
    <property type="evidence" value="ECO:0007669"/>
    <property type="project" value="UniProtKB-SubCell"/>
</dbReference>
<dbReference type="GO" id="GO:0004519">
    <property type="term" value="F:endonuclease activity"/>
    <property type="evidence" value="ECO:0007669"/>
    <property type="project" value="UniProtKB-UniRule"/>
</dbReference>
<dbReference type="GO" id="GO:0046872">
    <property type="term" value="F:metal ion binding"/>
    <property type="evidence" value="ECO:0007669"/>
    <property type="project" value="UniProtKB-UniRule"/>
</dbReference>
<dbReference type="GO" id="GO:0070651">
    <property type="term" value="P:nonfunctional rRNA decay"/>
    <property type="evidence" value="ECO:0007669"/>
    <property type="project" value="TreeGrafter"/>
</dbReference>
<dbReference type="GO" id="GO:0070966">
    <property type="term" value="P:nuclear-transcribed mRNA catabolic process, no-go decay"/>
    <property type="evidence" value="ECO:0007669"/>
    <property type="project" value="InterPro"/>
</dbReference>
<dbReference type="GO" id="GO:0070481">
    <property type="term" value="P:nuclear-transcribed mRNA catabolic process, non-stop decay"/>
    <property type="evidence" value="ECO:0007669"/>
    <property type="project" value="InterPro"/>
</dbReference>
<dbReference type="GO" id="GO:0032790">
    <property type="term" value="P:ribosome disassembly"/>
    <property type="evidence" value="ECO:0007669"/>
    <property type="project" value="TreeGrafter"/>
</dbReference>
<dbReference type="GO" id="GO:0071025">
    <property type="term" value="P:RNA surveillance"/>
    <property type="evidence" value="ECO:0007669"/>
    <property type="project" value="InterPro"/>
</dbReference>
<dbReference type="FunFam" id="2.30.30.870:FF:000002">
    <property type="entry name" value="Protein pelota homolog"/>
    <property type="match status" value="1"/>
</dbReference>
<dbReference type="FunFam" id="3.30.420.60:FF:000005">
    <property type="entry name" value="Protein pelota homolog"/>
    <property type="match status" value="1"/>
</dbReference>
<dbReference type="Gene3D" id="3.30.1330.30">
    <property type="match status" value="1"/>
</dbReference>
<dbReference type="Gene3D" id="3.30.420.60">
    <property type="entry name" value="eRF1 domain 2"/>
    <property type="match status" value="1"/>
</dbReference>
<dbReference type="Gene3D" id="2.30.30.870">
    <property type="entry name" value="Pelota, domain A"/>
    <property type="match status" value="1"/>
</dbReference>
<dbReference type="HAMAP" id="MF_01853">
    <property type="entry name" value="PelO"/>
    <property type="match status" value="1"/>
</dbReference>
<dbReference type="InterPro" id="IPR042226">
    <property type="entry name" value="eFR1_2_sf"/>
</dbReference>
<dbReference type="InterPro" id="IPR005140">
    <property type="entry name" value="eRF1_1_Pelota"/>
</dbReference>
<dbReference type="InterPro" id="IPR005141">
    <property type="entry name" value="eRF1_2"/>
</dbReference>
<dbReference type="InterPro" id="IPR005142">
    <property type="entry name" value="eRF1_3"/>
</dbReference>
<dbReference type="InterPro" id="IPR038069">
    <property type="entry name" value="Pelota/DOM34_N"/>
</dbReference>
<dbReference type="InterPro" id="IPR023521">
    <property type="entry name" value="Pelota_arc"/>
</dbReference>
<dbReference type="InterPro" id="IPR029064">
    <property type="entry name" value="Ribosomal_eL30-like_sf"/>
</dbReference>
<dbReference type="InterPro" id="IPR004405">
    <property type="entry name" value="Transl-rel_pelota"/>
</dbReference>
<dbReference type="NCBIfam" id="TIGR00111">
    <property type="entry name" value="pelota"/>
    <property type="match status" value="1"/>
</dbReference>
<dbReference type="PANTHER" id="PTHR10853">
    <property type="entry name" value="PELOTA"/>
    <property type="match status" value="1"/>
</dbReference>
<dbReference type="PANTHER" id="PTHR10853:SF0">
    <property type="entry name" value="PROTEIN PELOTA HOMOLOG"/>
    <property type="match status" value="1"/>
</dbReference>
<dbReference type="Pfam" id="PF03463">
    <property type="entry name" value="eRF1_1"/>
    <property type="match status" value="1"/>
</dbReference>
<dbReference type="Pfam" id="PF03464">
    <property type="entry name" value="eRF1_2"/>
    <property type="match status" value="1"/>
</dbReference>
<dbReference type="Pfam" id="PF03465">
    <property type="entry name" value="eRF1_3"/>
    <property type="match status" value="1"/>
</dbReference>
<dbReference type="SMART" id="SM01194">
    <property type="entry name" value="eRF1_1"/>
    <property type="match status" value="1"/>
</dbReference>
<dbReference type="SUPFAM" id="SSF159065">
    <property type="entry name" value="Dom34/Pelota N-terminal domain-like"/>
    <property type="match status" value="1"/>
</dbReference>
<dbReference type="SUPFAM" id="SSF55315">
    <property type="entry name" value="L30e-like"/>
    <property type="match status" value="1"/>
</dbReference>
<dbReference type="SUPFAM" id="SSF53137">
    <property type="entry name" value="Translational machinery components"/>
    <property type="match status" value="1"/>
</dbReference>
<sequence>MEILEEKPKEGKIKIKAETLDDLWHLYHIISEGDVVYAKTLRKQAQRSDSLRPEKVEAVPVFLGIKAEKINLHRFANQLRITGPIIYASREDVPLGRYHTLTVEPGTVITIQKEKWKNYHIERLKEAIESSKKARVMIVAIEDGEAEIAIVREYGLDFVGSITYNISGKRYNIKRDDEEKKFFHEVAKSMEELMKRENIEKAIVAGPGFYKENFVNFLRENYPELAKKVVTDDTSMGGRTGIYEVIKRGTVDKVYTESRISKEIKLVEKVIEEIAKNGLVAYGLKEVEEATNYGAVETLIVLDSLLKGELREKIEELMELARNLRASVVVVSSEHEGGDKLKALGGIAALLRFKIK</sequence>
<evidence type="ECO:0000255" key="1">
    <source>
        <dbReference type="HAMAP-Rule" id="MF_01853"/>
    </source>
</evidence>
<feature type="chain" id="PRO_0000361818" description="Protein pelota homolog">
    <location>
        <begin position="1"/>
        <end position="356"/>
    </location>
</feature>
<gene>
    <name evidence="1" type="primary">pelA</name>
    <name type="ordered locus">PF1379</name>
</gene>
<comment type="function">
    <text evidence="1">May function in recognizing stalled ribosomes, interact with stem-loop structures in stalled mRNA molecules, and effect endonucleolytic cleavage of the mRNA. May play a role in the release non-functional ribosomes and degradation of damaged mRNAs. Has endoribonuclease activity.</text>
</comment>
<comment type="cofactor">
    <cofactor evidence="1">
        <name>a divalent metal cation</name>
        <dbReference type="ChEBI" id="CHEBI:60240"/>
    </cofactor>
</comment>
<comment type="subunit">
    <text evidence="1">Monomer.</text>
</comment>
<comment type="subcellular location">
    <subcellularLocation>
        <location evidence="1">Cytoplasm</location>
    </subcellularLocation>
</comment>
<comment type="domain">
    <text evidence="1">The N-terminal domain has the RNA-binding Sm fold. It harbors the endoribonuclease activity.</text>
</comment>
<comment type="similarity">
    <text evidence="1">Belongs to the eukaryotic release factor 1 family. Pelota subfamily.</text>
</comment>
<accession>Q8U150</accession>
<proteinExistence type="inferred from homology"/>
<keyword id="KW-0963">Cytoplasm</keyword>
<keyword id="KW-0255">Endonuclease</keyword>
<keyword id="KW-0378">Hydrolase</keyword>
<keyword id="KW-0479">Metal-binding</keyword>
<keyword id="KW-0540">Nuclease</keyword>
<keyword id="KW-1185">Reference proteome</keyword>
<reference key="1">
    <citation type="journal article" date="1999" name="Genetics">
        <title>Divergence of the hyperthermophilic archaea Pyrococcus furiosus and P. horikoshii inferred from complete genomic sequences.</title>
        <authorList>
            <person name="Maeder D.L."/>
            <person name="Weiss R.B."/>
            <person name="Dunn D.M."/>
            <person name="Cherry J.L."/>
            <person name="Gonzalez J.M."/>
            <person name="DiRuggiero J."/>
            <person name="Robb F.T."/>
        </authorList>
    </citation>
    <scope>NUCLEOTIDE SEQUENCE [LARGE SCALE GENOMIC DNA]</scope>
    <source>
        <strain>ATCC 43587 / DSM 3638 / JCM 8422 / Vc1</strain>
    </source>
</reference>
<protein>
    <recommendedName>
        <fullName evidence="1">Protein pelota homolog</fullName>
        <ecNumber evidence="1">3.1.-.-</ecNumber>
    </recommendedName>
</protein>